<evidence type="ECO:0000255" key="1">
    <source>
        <dbReference type="HAMAP-Rule" id="MF_00588"/>
    </source>
</evidence>
<reference key="1">
    <citation type="journal article" date="2009" name="Proc. Natl. Acad. Sci. U.S.A.">
        <title>Biogeography of the Sulfolobus islandicus pan-genome.</title>
        <authorList>
            <person name="Reno M.L."/>
            <person name="Held N.L."/>
            <person name="Fields C.J."/>
            <person name="Burke P.V."/>
            <person name="Whitaker R.J."/>
        </authorList>
    </citation>
    <scope>NUCLEOTIDE SEQUENCE [LARGE SCALE GENOMIC DNA]</scope>
    <source>
        <strain>L.S.2.15 / Lassen #1</strain>
    </source>
</reference>
<dbReference type="EC" id="6.3.5.-" evidence="1"/>
<dbReference type="EMBL" id="CP001399">
    <property type="protein sequence ID" value="ACP35385.1"/>
    <property type="molecule type" value="Genomic_DNA"/>
</dbReference>
<dbReference type="RefSeq" id="WP_012711296.1">
    <property type="nucleotide sequence ID" value="NC_012589.1"/>
</dbReference>
<dbReference type="SMR" id="C3MPS2"/>
<dbReference type="GeneID" id="7941021"/>
<dbReference type="KEGG" id="sis:LS215_1377"/>
<dbReference type="HOGENOM" id="CLU_030702_0_0_2"/>
<dbReference type="OrthoDB" id="7316at2157"/>
<dbReference type="Proteomes" id="UP000001747">
    <property type="component" value="Chromosome"/>
</dbReference>
<dbReference type="GO" id="GO:0005737">
    <property type="term" value="C:cytoplasm"/>
    <property type="evidence" value="ECO:0007669"/>
    <property type="project" value="InterPro"/>
</dbReference>
<dbReference type="GO" id="GO:0004812">
    <property type="term" value="F:aminoacyl-tRNA ligase activity"/>
    <property type="evidence" value="ECO:0007669"/>
    <property type="project" value="InterPro"/>
</dbReference>
<dbReference type="GO" id="GO:0005524">
    <property type="term" value="F:ATP binding"/>
    <property type="evidence" value="ECO:0007669"/>
    <property type="project" value="UniProtKB-KW"/>
</dbReference>
<dbReference type="GO" id="GO:0050567">
    <property type="term" value="F:glutaminyl-tRNA synthase (glutamine-hydrolyzing) activity"/>
    <property type="evidence" value="ECO:0007669"/>
    <property type="project" value="UniProtKB-UniRule"/>
</dbReference>
<dbReference type="GO" id="GO:0070681">
    <property type="term" value="P:glutaminyl-tRNAGln biosynthesis via transamidation"/>
    <property type="evidence" value="ECO:0007669"/>
    <property type="project" value="TreeGrafter"/>
</dbReference>
<dbReference type="GO" id="GO:0006412">
    <property type="term" value="P:translation"/>
    <property type="evidence" value="ECO:0007669"/>
    <property type="project" value="UniProtKB-UniRule"/>
</dbReference>
<dbReference type="FunFam" id="1.10.150.380:FF:000002">
    <property type="entry name" value="Glutamyl-tRNA(Gln) amidotransferase subunit E"/>
    <property type="match status" value="1"/>
</dbReference>
<dbReference type="FunFam" id="3.30.1360.30:FF:000003">
    <property type="entry name" value="Glutamyl-tRNA(Gln) amidotransferase subunit E"/>
    <property type="match status" value="1"/>
</dbReference>
<dbReference type="Gene3D" id="1.10.10.410">
    <property type="match status" value="1"/>
</dbReference>
<dbReference type="Gene3D" id="3.30.1360.30">
    <property type="entry name" value="GAD-like domain"/>
    <property type="match status" value="1"/>
</dbReference>
<dbReference type="Gene3D" id="1.10.150.380">
    <property type="entry name" value="GatB domain, N-terminal subdomain"/>
    <property type="match status" value="1"/>
</dbReference>
<dbReference type="HAMAP" id="MF_00588">
    <property type="entry name" value="GatE"/>
    <property type="match status" value="1"/>
</dbReference>
<dbReference type="InterPro" id="IPR017959">
    <property type="entry name" value="Asn/Gln-tRNA_amidoTrfase_suB/E"/>
</dbReference>
<dbReference type="InterPro" id="IPR006075">
    <property type="entry name" value="Asn/Gln-tRNA_Trfase_suB/E_cat"/>
</dbReference>
<dbReference type="InterPro" id="IPR018027">
    <property type="entry name" value="Asn/Gln_amidotransferase"/>
</dbReference>
<dbReference type="InterPro" id="IPR003789">
    <property type="entry name" value="Asn/Gln_tRNA_amidoTrase-B-like"/>
</dbReference>
<dbReference type="InterPro" id="IPR004115">
    <property type="entry name" value="GAD-like_sf"/>
</dbReference>
<dbReference type="InterPro" id="IPR029351">
    <property type="entry name" value="GAD_dom"/>
</dbReference>
<dbReference type="InterPro" id="IPR042114">
    <property type="entry name" value="GatB_C_1"/>
</dbReference>
<dbReference type="InterPro" id="IPR023168">
    <property type="entry name" value="GatB_Yqey_C_2"/>
</dbReference>
<dbReference type="InterPro" id="IPR004414">
    <property type="entry name" value="GatE"/>
</dbReference>
<dbReference type="InterPro" id="IPR017958">
    <property type="entry name" value="Gln-tRNA_amidoTrfase_suB_CS"/>
</dbReference>
<dbReference type="InterPro" id="IPR014746">
    <property type="entry name" value="Gln_synth/guanido_kin_cat_dom"/>
</dbReference>
<dbReference type="NCBIfam" id="TIGR00134">
    <property type="entry name" value="gatE_arch"/>
    <property type="match status" value="1"/>
</dbReference>
<dbReference type="NCBIfam" id="NF003107">
    <property type="entry name" value="PRK04028.1"/>
    <property type="match status" value="1"/>
</dbReference>
<dbReference type="PANTHER" id="PTHR11659">
    <property type="entry name" value="GLUTAMYL-TRNA GLN AMIDOTRANSFERASE SUBUNIT B MITOCHONDRIAL AND PROKARYOTIC PET112-RELATED"/>
    <property type="match status" value="1"/>
</dbReference>
<dbReference type="PANTHER" id="PTHR11659:SF2">
    <property type="entry name" value="GLUTAMYL-TRNA(GLN) AMIDOTRANSFERASE SUBUNIT E"/>
    <property type="match status" value="1"/>
</dbReference>
<dbReference type="Pfam" id="PF02938">
    <property type="entry name" value="GAD"/>
    <property type="match status" value="1"/>
</dbReference>
<dbReference type="Pfam" id="PF02934">
    <property type="entry name" value="GatB_N"/>
    <property type="match status" value="1"/>
</dbReference>
<dbReference type="Pfam" id="PF02637">
    <property type="entry name" value="GatB_Yqey"/>
    <property type="match status" value="1"/>
</dbReference>
<dbReference type="SMART" id="SM00845">
    <property type="entry name" value="GatB_Yqey"/>
    <property type="match status" value="1"/>
</dbReference>
<dbReference type="SUPFAM" id="SSF55261">
    <property type="entry name" value="GAD domain-like"/>
    <property type="match status" value="1"/>
</dbReference>
<dbReference type="SUPFAM" id="SSF89095">
    <property type="entry name" value="GatB/YqeY motif"/>
    <property type="match status" value="1"/>
</dbReference>
<dbReference type="SUPFAM" id="SSF55931">
    <property type="entry name" value="Glutamine synthetase/guanido kinase"/>
    <property type="match status" value="1"/>
</dbReference>
<dbReference type="PROSITE" id="PS01234">
    <property type="entry name" value="GATB"/>
    <property type="match status" value="1"/>
</dbReference>
<name>GATE_SACI2</name>
<gene>
    <name evidence="1" type="primary">gatE</name>
    <name type="ordered locus">LS215_1377</name>
</gene>
<accession>C3MPS2</accession>
<comment type="function">
    <text evidence="1">Allows the formation of correctly charged Gln-tRNA(Gln) through the transamidation of misacylated Glu-tRNA(Gln) in organisms which lack glutaminyl-tRNA synthetase. The reaction takes place in the presence of glutamine and ATP through an activated gamma-phospho-Glu-tRNA(Gln). The GatDE system is specific for glutamate and does not act on aspartate.</text>
</comment>
<comment type="catalytic activity">
    <reaction evidence="1">
        <text>L-glutamyl-tRNA(Gln) + L-glutamine + ATP + H2O = L-glutaminyl-tRNA(Gln) + L-glutamate + ADP + phosphate + H(+)</text>
        <dbReference type="Rhea" id="RHEA:17521"/>
        <dbReference type="Rhea" id="RHEA-COMP:9681"/>
        <dbReference type="Rhea" id="RHEA-COMP:9684"/>
        <dbReference type="ChEBI" id="CHEBI:15377"/>
        <dbReference type="ChEBI" id="CHEBI:15378"/>
        <dbReference type="ChEBI" id="CHEBI:29985"/>
        <dbReference type="ChEBI" id="CHEBI:30616"/>
        <dbReference type="ChEBI" id="CHEBI:43474"/>
        <dbReference type="ChEBI" id="CHEBI:58359"/>
        <dbReference type="ChEBI" id="CHEBI:78520"/>
        <dbReference type="ChEBI" id="CHEBI:78521"/>
        <dbReference type="ChEBI" id="CHEBI:456216"/>
    </reaction>
</comment>
<comment type="subunit">
    <text evidence="1">Heterodimer of GatD and GatE.</text>
</comment>
<comment type="similarity">
    <text evidence="1">Belongs to the GatB/GatE family. GatE subfamily.</text>
</comment>
<keyword id="KW-0067">ATP-binding</keyword>
<keyword id="KW-0436">Ligase</keyword>
<keyword id="KW-0547">Nucleotide-binding</keyword>
<keyword id="KW-0648">Protein biosynthesis</keyword>
<proteinExistence type="inferred from homology"/>
<organism>
    <name type="scientific">Saccharolobus islandicus (strain L.S.2.15 / Lassen #1)</name>
    <name type="common">Sulfolobus islandicus</name>
    <dbReference type="NCBI Taxonomy" id="429572"/>
    <lineage>
        <taxon>Archaea</taxon>
        <taxon>Thermoproteota</taxon>
        <taxon>Thermoprotei</taxon>
        <taxon>Sulfolobales</taxon>
        <taxon>Sulfolobaceae</taxon>
        <taxon>Saccharolobus</taxon>
    </lineage>
</organism>
<feature type="chain" id="PRO_1000212158" description="Glutamyl-tRNA(Gln) amidotransferase subunit E">
    <location>
        <begin position="1"/>
        <end position="633"/>
    </location>
</feature>
<sequence length="633" mass="71528">MSELNYEELGLKVGLEIHQQLNTSHKLFCNCSTNLKEDYKLTLERYLRPALSELGEVDVAALFEWKKGKKYVYRIPITTSCLVEADEEPPHAINEEALKIALAIAIALNSNIVDEIYVMRKIVIDGSNTTGFQRTAIVALGGMLKDEGVTIQTIAVEEDAARKIDERTDQVTYSLDRLGIPLIEISTGPDIRSPEQAERVALKIGQLLRMTGKVKRGIGTIRQDLNISIKGGTKIEIKGVQKLELIPDIVRYEAMRQFNLLKIKEELNKRGVSKNLILSNFVVKDLTELFKNTNSKIIKSGIEKGGLVYGIRAYKLKGILGWELIPKKRRFGTEIADYVRALAELGGLFHSDELPNYGITEEEINKVREALNATTEDGFILIVGERERLDKAVEVIRDRILLAFDGIPKETRGALDDGTTKFLRPQPSSARMYPETDIPPRRIDEKLLEDAKKFVPESPESKMKRYITLGLSEELAKEIIRDPRLDLFEELVNKYSPKVSPVVIASTITNTLKYVKSKGGDISKINEEDIEELIKSVYENKISKDSISEILLEYTTNKNVELKDVIRKYEALPTEELEKIIDDVISSNLDEIRKRKDKAVNLIMSKVMSKVKGRAEGKVILELIKSRLKNVME</sequence>
<protein>
    <recommendedName>
        <fullName evidence="1">Glutamyl-tRNA(Gln) amidotransferase subunit E</fullName>
        <shortName evidence="1">Glu-ADT subunit E</shortName>
        <ecNumber evidence="1">6.3.5.-</ecNumber>
    </recommendedName>
</protein>